<protein>
    <recommendedName>
        <fullName evidence="9">Protein Fe65 homolog</fullName>
    </recommendedName>
</protein>
<organism evidence="8">
    <name type="scientific">Caenorhabditis elegans</name>
    <dbReference type="NCBI Taxonomy" id="6239"/>
    <lineage>
        <taxon>Eukaryota</taxon>
        <taxon>Metazoa</taxon>
        <taxon>Ecdysozoa</taxon>
        <taxon>Nematoda</taxon>
        <taxon>Chromadorea</taxon>
        <taxon>Rhabditida</taxon>
        <taxon>Rhabditina</taxon>
        <taxon>Rhabditomorpha</taxon>
        <taxon>Rhabditoidea</taxon>
        <taxon>Rhabditidae</taxon>
        <taxon>Peloderinae</taxon>
        <taxon>Caenorhabditis</taxon>
    </lineage>
</organism>
<evidence type="ECO:0000255" key="1">
    <source>
        <dbReference type="PROSITE-ProRule" id="PRU00148"/>
    </source>
</evidence>
<evidence type="ECO:0000255" key="2">
    <source>
        <dbReference type="PROSITE-ProRule" id="PRU00224"/>
    </source>
</evidence>
<evidence type="ECO:0000256" key="3">
    <source>
        <dbReference type="SAM" id="MobiDB-lite"/>
    </source>
</evidence>
<evidence type="ECO:0000269" key="4">
    <source>
    </source>
</evidence>
<evidence type="ECO:0000269" key="5">
    <source>
    </source>
</evidence>
<evidence type="ECO:0000305" key="6"/>
<evidence type="ECO:0000312" key="7">
    <source>
        <dbReference type="EMBL" id="CAC87812.1"/>
    </source>
</evidence>
<evidence type="ECO:0000312" key="8">
    <source>
        <dbReference type="Proteomes" id="UP000001940"/>
    </source>
</evidence>
<evidence type="ECO:0000312" key="9">
    <source>
        <dbReference type="WormBase" id="Y54F10AM.2a"/>
    </source>
</evidence>
<evidence type="ECO:0000312" key="10">
    <source>
        <dbReference type="WormBase" id="Y54F10AM.2b"/>
    </source>
</evidence>
<evidence type="ECO:0000312" key="11">
    <source>
        <dbReference type="WormBase" id="Y54F10AM.2c"/>
    </source>
</evidence>
<dbReference type="EMBL" id="BX284603">
    <property type="protein sequence ID" value="CCD73819.2"/>
    <property type="molecule type" value="Genomic_DNA"/>
</dbReference>
<dbReference type="EMBL" id="BX284603">
    <property type="protein sequence ID" value="CCD73820.1"/>
    <property type="molecule type" value="Genomic_DNA"/>
</dbReference>
<dbReference type="EMBL" id="BX284603">
    <property type="protein sequence ID" value="CCD73821.1"/>
    <property type="molecule type" value="Genomic_DNA"/>
</dbReference>
<dbReference type="EMBL" id="AJ345015">
    <property type="protein sequence ID" value="CAC87812.1"/>
    <property type="molecule type" value="mRNA"/>
</dbReference>
<dbReference type="RefSeq" id="NP_001022906.1">
    <molecule id="Q9BKZ9-2"/>
    <property type="nucleotide sequence ID" value="NM_001027735.5"/>
</dbReference>
<dbReference type="RefSeq" id="NP_001022907.1">
    <property type="nucleotide sequence ID" value="NM_001027736.4"/>
</dbReference>
<dbReference type="RefSeq" id="NP_001360128.1">
    <molecule id="Q9BKZ9-3"/>
    <property type="nucleotide sequence ID" value="NM_001373858.3"/>
</dbReference>
<dbReference type="RefSeq" id="NP_497578.4">
    <molecule id="Q9BKZ9-1"/>
    <property type="nucleotide sequence ID" value="NM_065177.4"/>
</dbReference>
<dbReference type="SMR" id="Q9BKZ9"/>
<dbReference type="DIP" id="DIP-25952N"/>
<dbReference type="FunCoup" id="Q9BKZ9">
    <property type="interactions" value="642"/>
</dbReference>
<dbReference type="IntAct" id="Q9BKZ9">
    <property type="interactions" value="2"/>
</dbReference>
<dbReference type="STRING" id="6239.Y54F10AM.2a.1"/>
<dbReference type="PaxDb" id="6239-Y54F10AM.2a"/>
<dbReference type="PeptideAtlas" id="Q9BKZ9"/>
<dbReference type="EnsemblMetazoa" id="Y54F10AM.2a.1">
    <molecule id="Q9BKZ9-1"/>
    <property type="protein sequence ID" value="Y54F10AM.2a.1"/>
    <property type="gene ID" value="WBGene00001410"/>
</dbReference>
<dbReference type="EnsemblMetazoa" id="Y54F10AM.2b.1">
    <molecule id="Q9BKZ9-2"/>
    <property type="protein sequence ID" value="Y54F10AM.2b.1"/>
    <property type="gene ID" value="WBGene00001410"/>
</dbReference>
<dbReference type="EnsemblMetazoa" id="Y54F10AM.2c.1">
    <molecule id="Q9BKZ9-3"/>
    <property type="protein sequence ID" value="Y54F10AM.2c.1"/>
    <property type="gene ID" value="WBGene00001410"/>
</dbReference>
<dbReference type="EnsemblMetazoa" id="Y54F10AM.2c.2">
    <molecule id="Q9BKZ9-3"/>
    <property type="protein sequence ID" value="Y54F10AM.2c.2"/>
    <property type="gene ID" value="WBGene00001410"/>
</dbReference>
<dbReference type="GeneID" id="175373"/>
<dbReference type="KEGG" id="cel:CELE_Y54F10AM.2"/>
<dbReference type="UCSC" id="Y54F10AM.2c.2">
    <property type="organism name" value="c. elegans"/>
</dbReference>
<dbReference type="AGR" id="WB:WBGene00001410"/>
<dbReference type="CTD" id="175373"/>
<dbReference type="WormBase" id="Y54F10AM.2a">
    <molecule id="Q9BKZ9-1"/>
    <property type="protein sequence ID" value="CE50322"/>
    <property type="gene ID" value="WBGene00001410"/>
    <property type="gene designation" value="feh-1"/>
</dbReference>
<dbReference type="WormBase" id="Y54F10AM.2b">
    <molecule id="Q9BKZ9-2"/>
    <property type="protein sequence ID" value="CE32985"/>
    <property type="gene ID" value="WBGene00001410"/>
    <property type="gene designation" value="feh-1"/>
</dbReference>
<dbReference type="WormBase" id="Y54F10AM.2c">
    <molecule id="Q9BKZ9-3"/>
    <property type="protein sequence ID" value="CE38648"/>
    <property type="gene ID" value="WBGene00001410"/>
    <property type="gene designation" value="feh-1"/>
</dbReference>
<dbReference type="eggNOG" id="ENOG502QT08">
    <property type="taxonomic scope" value="Eukaryota"/>
</dbReference>
<dbReference type="GeneTree" id="ENSGT00390000000002"/>
<dbReference type="InParanoid" id="Q9BKZ9"/>
<dbReference type="OMA" id="SWQEEYF"/>
<dbReference type="OrthoDB" id="5969782at2759"/>
<dbReference type="PRO" id="PR:Q9BKZ9"/>
<dbReference type="Proteomes" id="UP000001940">
    <property type="component" value="Chromosome III"/>
</dbReference>
<dbReference type="Bgee" id="WBGene00001410">
    <property type="expression patterns" value="Expressed in pharyngeal muscle cell (C elegans) and 3 other cell types or tissues"/>
</dbReference>
<dbReference type="ExpressionAtlas" id="Q9BKZ9">
    <property type="expression patterns" value="baseline and differential"/>
</dbReference>
<dbReference type="GO" id="GO:0005884">
    <property type="term" value="C:actin filament"/>
    <property type="evidence" value="ECO:0000314"/>
    <property type="project" value="WormBase"/>
</dbReference>
<dbReference type="GO" id="GO:0005737">
    <property type="term" value="C:cytoplasm"/>
    <property type="evidence" value="ECO:0000318"/>
    <property type="project" value="GO_Central"/>
</dbReference>
<dbReference type="GO" id="GO:0005634">
    <property type="term" value="C:nucleus"/>
    <property type="evidence" value="ECO:0000318"/>
    <property type="project" value="GO_Central"/>
</dbReference>
<dbReference type="GO" id="GO:0001540">
    <property type="term" value="F:amyloid-beta binding"/>
    <property type="evidence" value="ECO:0000314"/>
    <property type="project" value="WormBase"/>
</dbReference>
<dbReference type="GO" id="GO:0060090">
    <property type="term" value="F:molecular adaptor activity"/>
    <property type="evidence" value="ECO:0000318"/>
    <property type="project" value="GO_Central"/>
</dbReference>
<dbReference type="GO" id="GO:0009792">
    <property type="term" value="P:embryo development ending in birth or egg hatching"/>
    <property type="evidence" value="ECO:0000315"/>
    <property type="project" value="WormBase"/>
</dbReference>
<dbReference type="GO" id="GO:0007631">
    <property type="term" value="P:feeding behavior"/>
    <property type="evidence" value="ECO:0000315"/>
    <property type="project" value="WormBase"/>
</dbReference>
<dbReference type="GO" id="GO:0002119">
    <property type="term" value="P:nematode larval development"/>
    <property type="evidence" value="ECO:0000315"/>
    <property type="project" value="WormBase"/>
</dbReference>
<dbReference type="GO" id="GO:0006355">
    <property type="term" value="P:regulation of DNA-templated transcription"/>
    <property type="evidence" value="ECO:0000318"/>
    <property type="project" value="GO_Central"/>
</dbReference>
<dbReference type="CDD" id="cd01272">
    <property type="entry name" value="PTB1_Fe65"/>
    <property type="match status" value="1"/>
</dbReference>
<dbReference type="CDD" id="cd01271">
    <property type="entry name" value="PTB2_Fe65"/>
    <property type="match status" value="1"/>
</dbReference>
<dbReference type="CDD" id="cd00201">
    <property type="entry name" value="WW"/>
    <property type="match status" value="1"/>
</dbReference>
<dbReference type="FunFam" id="2.30.29.30:FF:000034">
    <property type="entry name" value="amyloid beta A4 precursor protein-binding family B member 2"/>
    <property type="match status" value="1"/>
</dbReference>
<dbReference type="FunFam" id="2.30.29.30:FF:000317">
    <property type="entry name" value="Amyloid beta A4 protein-binding family B member"/>
    <property type="match status" value="1"/>
</dbReference>
<dbReference type="Gene3D" id="2.20.70.10">
    <property type="match status" value="1"/>
</dbReference>
<dbReference type="Gene3D" id="2.30.29.30">
    <property type="entry name" value="Pleckstrin-homology domain (PH domain)/Phosphotyrosine-binding domain (PTB)"/>
    <property type="match status" value="2"/>
</dbReference>
<dbReference type="InterPro" id="IPR039576">
    <property type="entry name" value="APBB1/2/3"/>
</dbReference>
<dbReference type="InterPro" id="IPR011993">
    <property type="entry name" value="PH-like_dom_sf"/>
</dbReference>
<dbReference type="InterPro" id="IPR006020">
    <property type="entry name" value="PTB/PI_dom"/>
</dbReference>
<dbReference type="InterPro" id="IPR001202">
    <property type="entry name" value="WW_dom"/>
</dbReference>
<dbReference type="InterPro" id="IPR036020">
    <property type="entry name" value="WW_dom_sf"/>
</dbReference>
<dbReference type="PANTHER" id="PTHR14058">
    <property type="entry name" value="AMYLOID BETA A4 PRECURSOR PROTEIN-BINDING FAMILY B"/>
    <property type="match status" value="1"/>
</dbReference>
<dbReference type="PANTHER" id="PTHR14058:SF8">
    <property type="entry name" value="PROTEIN FE65 HOMOLOG"/>
    <property type="match status" value="1"/>
</dbReference>
<dbReference type="Pfam" id="PF00640">
    <property type="entry name" value="PID"/>
    <property type="match status" value="2"/>
</dbReference>
<dbReference type="SMART" id="SM00462">
    <property type="entry name" value="PTB"/>
    <property type="match status" value="2"/>
</dbReference>
<dbReference type="SMART" id="SM00456">
    <property type="entry name" value="WW"/>
    <property type="match status" value="1"/>
</dbReference>
<dbReference type="SUPFAM" id="SSF50729">
    <property type="entry name" value="PH domain-like"/>
    <property type="match status" value="2"/>
</dbReference>
<dbReference type="SUPFAM" id="SSF51045">
    <property type="entry name" value="WW domain"/>
    <property type="match status" value="1"/>
</dbReference>
<dbReference type="PROSITE" id="PS01179">
    <property type="entry name" value="PID"/>
    <property type="match status" value="2"/>
</dbReference>
<dbReference type="PROSITE" id="PS50020">
    <property type="entry name" value="WW_DOMAIN_2"/>
    <property type="match status" value="1"/>
</dbReference>
<reference evidence="8" key="1">
    <citation type="journal article" date="1998" name="Science">
        <title>Genome sequence of the nematode C. elegans: a platform for investigating biology.</title>
        <authorList>
            <consortium name="The C. elegans sequencing consortium"/>
        </authorList>
    </citation>
    <scope>NUCLEOTIDE SEQUENCE [LARGE SCALE GENOMIC DNA]</scope>
    <source>
        <strain evidence="8">Bristol N2</strain>
    </source>
</reference>
<reference evidence="7" key="2">
    <citation type="journal article" date="2002" name="J. Cell Sci.">
        <title>feh-1 and apl-1, the Caenorhabditis elegans orthologues of mammalian Fe65 and beta-amyloid precursor protein genes, are involved in the same pathway that controls nematode pharyngeal pumping.</title>
        <authorList>
            <person name="Zambrano N."/>
            <person name="Bimonte M."/>
            <person name="Arbucci S."/>
            <person name="Gianni D."/>
            <person name="Russo T."/>
            <person name="Bazzicalupo P."/>
        </authorList>
    </citation>
    <scope>NUCLEOTIDE SEQUENCE [MRNA] OF 89-665 (ISOFORM A)</scope>
    <scope>FUNCTION</scope>
    <scope>INTERACTION WITH APL-1</scope>
    <scope>SUBCELLULAR LOCATION</scope>
    <scope>TISSUE SPECIFICITY</scope>
    <scope>DEVELOPMENTAL STAGE</scope>
    <scope>PHOSPHORYLATION</scope>
    <scope>DISRUPTION PHENOTYPE</scope>
</reference>
<reference evidence="6" key="3">
    <citation type="journal article" date="2004" name="Eur. J. Neurosci.">
        <title>Mutation of the feh-1 gene, the Caenorhabditis elegans orthologue of mammalian Fe65, decreases the expression of two acetylcholinesterase genes.</title>
        <authorList>
            <person name="Bimonte M."/>
            <person name="Gianni D."/>
            <person name="Allegra D."/>
            <person name="Russo T."/>
            <person name="Zambrano N."/>
        </authorList>
    </citation>
    <scope>FUNCTION</scope>
    <scope>DISRUPTION PHENOTYPE</scope>
</reference>
<keyword id="KW-0025">Alternative splicing</keyword>
<keyword id="KW-0963">Cytoplasm</keyword>
<keyword id="KW-0206">Cytoskeleton</keyword>
<keyword id="KW-1185">Reference proteome</keyword>
<keyword id="KW-0677">Repeat</keyword>
<keyword id="KW-0804">Transcription</keyword>
<keyword id="KW-0805">Transcription regulation</keyword>
<comment type="function">
    <text evidence="4 5">Modulates pharyngeal pumping activity, at least in part by regulating expression of the acetylcholinesterase genes ace-1 and ace-2 (PubMed:11896189, PubMed:15355315).</text>
</comment>
<comment type="subunit">
    <text evidence="4">Interacts (via PID 2 domain) with apl-1 (via cytoplasmic domain).</text>
</comment>
<comment type="subcellular location">
    <subcellularLocation>
        <location evidence="4">Cytoplasm</location>
    </subcellularLocation>
    <subcellularLocation>
        <location evidence="4">Cytoplasm</location>
        <location evidence="4">Cytoskeleton</location>
    </subcellularLocation>
</comment>
<comment type="alternative products">
    <event type="alternative splicing"/>
    <isoform>
        <id>Q9BKZ9-1</id>
        <name evidence="9">a</name>
        <sequence type="displayed"/>
    </isoform>
    <isoform>
        <id>Q9BKZ9-2</id>
        <name evidence="10">b</name>
        <sequence type="described" ref="VSP_057961"/>
    </isoform>
    <isoform>
        <id>Q9BKZ9-3</id>
        <name evidence="11">c</name>
        <sequence type="described" ref="VSP_057960"/>
    </isoform>
</comment>
<comment type="tissue specificity">
    <text evidence="4">Expressed in the pharynx (including pharyngeal muscle and nerve cells), ventral nerve cord and tail neurons.</text>
</comment>
<comment type="developmental stage">
    <text evidence="4">Expressed in the pharynx from three-fold stage embryos to adulthood.</text>
</comment>
<comment type="PTM">
    <text evidence="4">Phosphorylated.</text>
</comment>
<comment type="disruption phenotype">
    <text evidence="4 5">Embryonic lethality or larval arrest (PubMed:11896189, PubMed:15355315). Heterozygous animals are viable and display increased pharyngeal pumping rates associated with reduced acetylcholinesterase activity (PubMed:11896189, PubMed:15355315).</text>
</comment>
<proteinExistence type="evidence at protein level"/>
<sequence length="665" mass="76322">MREGTPRVRIEVNKGSNRPSQFVSESEEQRLQRVQSRDSDTATMNFVTDDRMMEEHDEYSAFKEAYEEEESREYVIENGVKRLVNQHYDSRGYSSAGRGQKGRREEERRRNMAVDYSSQDFRQSLAAIDQASRDGAISRGEDGVRVRQIGDTTIMTEHRDPYSFYWQLDQARREAESPPRRPPPTDYVIDEEEEVLETVYSPEADDVMFENQYRRPVRHPLPPPPPIMEEEPKDLPPGWEKHEDPQGYSYYWHVDSGTIQRQPPPPVNRETQADAPPPQIIQLPPQQPVIEEHAFKQTTTKRRIEQDEMSEREIEDVAMIENGDTYHKPVRFAVRSLGWTDISEDELTAEKSSRAVNRAIVDLTTRSDIDSIPKWGDGRELIMELDDNELALLDPDSMNVIHSERIQAIRVWGVGRDNGRDFAYVSRDRGTRRFMCHVFRCDTSAKTIANTLRDICKRLMLHRRPSSLHAIESGEKRIVRSEGLTAPIDEPRKVIRCHFLGVTQVPKATGIEILNEAVDRLVSQVRSERWILADVSIAPSTIAIVEVNGQQIAECRVRYLSFLGIGRDVKHCAFIMQTSSESFMCYVFHVEPNAAAMAKMVEAACKLRYQKVLDAHSSSRHHSGMSIHGQHPPSTYHGKGWTETFRDAFGSVTSRMVPSRSAQRL</sequence>
<feature type="chain" id="PRO_0000434596" description="Protein Fe65 homolog" evidence="6">
    <location>
        <begin position="1"/>
        <end position="665"/>
    </location>
</feature>
<feature type="domain" description="WW" evidence="2">
    <location>
        <begin position="233"/>
        <end position="266"/>
    </location>
</feature>
<feature type="domain" description="PID 1" evidence="1">
    <location>
        <begin position="330"/>
        <end position="456"/>
    </location>
</feature>
<feature type="domain" description="PID 2" evidence="1">
    <location>
        <begin position="499"/>
        <end position="615"/>
    </location>
</feature>
<feature type="region of interest" description="Disordered" evidence="3">
    <location>
        <begin position="1"/>
        <end position="43"/>
    </location>
</feature>
<feature type="region of interest" description="Disordered" evidence="3">
    <location>
        <begin position="90"/>
        <end position="111"/>
    </location>
</feature>
<feature type="compositionally biased region" description="Basic and acidic residues" evidence="3">
    <location>
        <begin position="1"/>
        <end position="12"/>
    </location>
</feature>
<feature type="compositionally biased region" description="Polar residues" evidence="3">
    <location>
        <begin position="14"/>
        <end position="24"/>
    </location>
</feature>
<feature type="compositionally biased region" description="Basic and acidic residues" evidence="3">
    <location>
        <begin position="27"/>
        <end position="40"/>
    </location>
</feature>
<feature type="compositionally biased region" description="Basic and acidic residues" evidence="3">
    <location>
        <begin position="102"/>
        <end position="111"/>
    </location>
</feature>
<feature type="splice variant" id="VSP_057960" description="In isoform c." evidence="6">
    <location>
        <begin position="1"/>
        <end position="111"/>
    </location>
</feature>
<feature type="splice variant" id="VSP_057961" description="In isoform b." evidence="6">
    <original>KGWTETFRDAFGSVTSRMVPSRSAQRL</original>
    <variation>MD</variation>
    <location>
        <begin position="639"/>
        <end position="665"/>
    </location>
</feature>
<gene>
    <name evidence="9" type="primary">feh-1</name>
    <name evidence="9" type="ORF">Y54F10AM.2</name>
</gene>
<name>FEH1_CAEEL</name>
<accession>Q9BKZ9</accession>
<accession>H2L0Q7</accession>
<accession>H2L0Q8</accession>
<accession>Q8WQE2</accession>